<accession>A0A0M3VI47</accession>
<name>CBL_MIMPU</name>
<dbReference type="EC" id="4.4.1.13" evidence="3"/>
<dbReference type="EMBL" id="LC081343">
    <property type="protein sequence ID" value="BAS32612.1"/>
    <property type="molecule type" value="mRNA"/>
</dbReference>
<dbReference type="SMR" id="A0A0M3VI47"/>
<dbReference type="BRENDA" id="4.4.1.13">
    <property type="organism ID" value="3382"/>
</dbReference>
<dbReference type="GO" id="GO:0009507">
    <property type="term" value="C:chloroplast"/>
    <property type="evidence" value="ECO:0007669"/>
    <property type="project" value="UniProtKB-SubCell"/>
</dbReference>
<dbReference type="GO" id="GO:0047804">
    <property type="term" value="F:cysteine-S-conjugate beta-lyase activity"/>
    <property type="evidence" value="ECO:0000314"/>
    <property type="project" value="UniProtKB"/>
</dbReference>
<dbReference type="GO" id="GO:0030170">
    <property type="term" value="F:pyridoxal phosphate binding"/>
    <property type="evidence" value="ECO:0000314"/>
    <property type="project" value="UniProtKB"/>
</dbReference>
<dbReference type="GO" id="GO:0071266">
    <property type="term" value="P:'de novo' L-methionine biosynthetic process"/>
    <property type="evidence" value="ECO:0007669"/>
    <property type="project" value="InterPro"/>
</dbReference>
<dbReference type="GO" id="GO:0019346">
    <property type="term" value="P:transsulfuration"/>
    <property type="evidence" value="ECO:0007669"/>
    <property type="project" value="InterPro"/>
</dbReference>
<dbReference type="CDD" id="cd00614">
    <property type="entry name" value="CGS_like"/>
    <property type="match status" value="1"/>
</dbReference>
<dbReference type="FunFam" id="3.90.1150.10:FF:000013">
    <property type="entry name" value="Cystathionine beta-lyase"/>
    <property type="match status" value="1"/>
</dbReference>
<dbReference type="FunFam" id="3.40.640.10:FF:000009">
    <property type="entry name" value="Cystathionine gamma-synthase homolog"/>
    <property type="match status" value="1"/>
</dbReference>
<dbReference type="Gene3D" id="3.90.1150.10">
    <property type="entry name" value="Aspartate Aminotransferase, domain 1"/>
    <property type="match status" value="1"/>
</dbReference>
<dbReference type="Gene3D" id="3.40.640.10">
    <property type="entry name" value="Type I PLP-dependent aspartate aminotransferase-like (Major domain)"/>
    <property type="match status" value="1"/>
</dbReference>
<dbReference type="InterPro" id="IPR000277">
    <property type="entry name" value="Cys/Met-Metab_PyrdxlP-dep_enz"/>
</dbReference>
<dbReference type="InterPro" id="IPR006238">
    <property type="entry name" value="Cys_b_lyase_euk"/>
</dbReference>
<dbReference type="InterPro" id="IPR054542">
    <property type="entry name" value="Cys_met_metab_PP"/>
</dbReference>
<dbReference type="InterPro" id="IPR015424">
    <property type="entry name" value="PyrdxlP-dep_Trfase"/>
</dbReference>
<dbReference type="InterPro" id="IPR015421">
    <property type="entry name" value="PyrdxlP-dep_Trfase_major"/>
</dbReference>
<dbReference type="InterPro" id="IPR015422">
    <property type="entry name" value="PyrdxlP-dep_Trfase_small"/>
</dbReference>
<dbReference type="NCBIfam" id="TIGR01329">
    <property type="entry name" value="cysta_beta_ly_E"/>
    <property type="match status" value="1"/>
</dbReference>
<dbReference type="PANTHER" id="PTHR11808:SF50">
    <property type="entry name" value="CYSTATHIONINE BETA-LYASE"/>
    <property type="match status" value="1"/>
</dbReference>
<dbReference type="PANTHER" id="PTHR11808">
    <property type="entry name" value="TRANS-SULFURATION ENZYME FAMILY MEMBER"/>
    <property type="match status" value="1"/>
</dbReference>
<dbReference type="Pfam" id="PF01053">
    <property type="entry name" value="Cys_Met_Meta_PP"/>
    <property type="match status" value="1"/>
</dbReference>
<dbReference type="PIRSF" id="PIRSF001434">
    <property type="entry name" value="CGS"/>
    <property type="match status" value="1"/>
</dbReference>
<dbReference type="SUPFAM" id="SSF53383">
    <property type="entry name" value="PLP-dependent transferases"/>
    <property type="match status" value="1"/>
</dbReference>
<dbReference type="PROSITE" id="PS00868">
    <property type="entry name" value="CYS_MET_METAB_PP"/>
    <property type="match status" value="1"/>
</dbReference>
<evidence type="ECO:0000250" key="1">
    <source>
        <dbReference type="UniProtKB" id="P53780"/>
    </source>
</evidence>
<evidence type="ECO:0000255" key="2"/>
<evidence type="ECO:0000269" key="3">
    <source>
    </source>
</evidence>
<evidence type="ECO:0000303" key="4">
    <source>
    </source>
</evidence>
<evidence type="ECO:0000305" key="5"/>
<evidence type="ECO:0000305" key="6">
    <source>
    </source>
</evidence>
<feature type="transit peptide" description="Chloroplast" evidence="2">
    <location>
        <begin position="1"/>
        <end position="51"/>
    </location>
</feature>
<feature type="chain" id="PRO_0000460740" description="Cystathionine beta-lyase, chloroplastic">
    <location>
        <begin position="52"/>
        <end position="457"/>
    </location>
</feature>
<feature type="binding site" evidence="1">
    <location>
        <position position="120"/>
    </location>
    <ligand>
        <name>pyridoxal 5'-phosphate</name>
        <dbReference type="ChEBI" id="CHEBI:597326"/>
    </ligand>
</feature>
<feature type="binding site" evidence="1">
    <location>
        <position position="122"/>
    </location>
    <ligand>
        <name>pyridoxal 5'-phosphate</name>
        <dbReference type="ChEBI" id="CHEBI:597326"/>
    </ligand>
</feature>
<feature type="binding site" evidence="1">
    <location>
        <position position="150"/>
    </location>
    <ligand>
        <name>pyridoxal 5'-phosphate</name>
        <dbReference type="ChEBI" id="CHEBI:597326"/>
    </ligand>
</feature>
<feature type="binding site" evidence="1">
    <location>
        <position position="151"/>
    </location>
    <ligand>
        <name>pyridoxal 5'-phosphate</name>
        <dbReference type="ChEBI" id="CHEBI:597326"/>
    </ligand>
</feature>
<feature type="binding site" evidence="1">
    <location>
        <position position="268"/>
    </location>
    <ligand>
        <name>pyridoxal 5'-phosphate</name>
        <dbReference type="ChEBI" id="CHEBI:597326"/>
    </ligand>
</feature>
<feature type="binding site" evidence="1">
    <location>
        <position position="270"/>
    </location>
    <ligand>
        <name>pyridoxal 5'-phosphate</name>
        <dbReference type="ChEBI" id="CHEBI:597326"/>
    </ligand>
</feature>
<feature type="modified residue" description="N6-(pyridoxal phosphate)lysine" evidence="1">
    <location>
        <position position="271"/>
    </location>
</feature>
<gene>
    <name evidence="4" type="primary">CBL</name>
</gene>
<organism>
    <name type="scientific">Mimosa pudica</name>
    <name type="common">Sensitive plant</name>
    <dbReference type="NCBI Taxonomy" id="76306"/>
    <lineage>
        <taxon>Eukaryota</taxon>
        <taxon>Viridiplantae</taxon>
        <taxon>Streptophyta</taxon>
        <taxon>Embryophyta</taxon>
        <taxon>Tracheophyta</taxon>
        <taxon>Spermatophyta</taxon>
        <taxon>Magnoliopsida</taxon>
        <taxon>eudicotyledons</taxon>
        <taxon>Gunneridae</taxon>
        <taxon>Pentapetalae</taxon>
        <taxon>rosids</taxon>
        <taxon>fabids</taxon>
        <taxon>Fabales</taxon>
        <taxon>Fabaceae</taxon>
        <taxon>Caesalpinioideae</taxon>
        <taxon>mimosoid clade</taxon>
        <taxon>Mimoseae</taxon>
        <taxon>Mimosa</taxon>
    </lineage>
</organism>
<protein>
    <recommendedName>
        <fullName evidence="4">Cystathionine beta-lyase, chloroplastic</fullName>
        <ecNumber evidence="3">4.4.1.13</ecNumber>
    </recommendedName>
    <alternativeName>
        <fullName evidence="5">Cysteine-S-conjugate beta-lyase</fullName>
    </alternativeName>
</protein>
<reference key="1">
    <citation type="journal article" date="2019" name="J. Plant Res.">
        <title>Molecular characterization of mimosinase and cystathionine beta-lyase in the Mimosoideae subfamily member Mimosa pudica.</title>
        <authorList>
            <person name="Oogai S."/>
            <person name="Fukuta M."/>
            <person name="Watanabe K."/>
            <person name="Inafuku M."/>
            <person name="Oku H."/>
        </authorList>
    </citation>
    <scope>NUCLEOTIDE SEQUENCE [MRNA]</scope>
    <scope>FUNCTION</scope>
    <scope>CATALYTIC ACTIVITY</scope>
    <scope>COFACTOR</scope>
    <scope>BIOPHYSICOCHEMICAL PROPERTIES</scope>
</reference>
<keyword id="KW-0028">Amino-acid biosynthesis</keyword>
<keyword id="KW-0150">Chloroplast</keyword>
<keyword id="KW-0456">Lyase</keyword>
<keyword id="KW-0486">Methionine biosynthesis</keyword>
<keyword id="KW-0934">Plastid</keyword>
<keyword id="KW-0663">Pyridoxal phosphate</keyword>
<keyword id="KW-0809">Transit peptide</keyword>
<comment type="function">
    <text evidence="3">Catalyzes the degradation of cystathionine.</text>
</comment>
<comment type="catalytic activity">
    <reaction evidence="3">
        <text>L,L-cystathionine + H2O = L-homocysteine + pyruvate + NH4(+)</text>
        <dbReference type="Rhea" id="RHEA:13965"/>
        <dbReference type="ChEBI" id="CHEBI:15361"/>
        <dbReference type="ChEBI" id="CHEBI:15377"/>
        <dbReference type="ChEBI" id="CHEBI:28938"/>
        <dbReference type="ChEBI" id="CHEBI:58161"/>
        <dbReference type="ChEBI" id="CHEBI:58199"/>
    </reaction>
    <physiologicalReaction direction="left-to-right" evidence="6">
        <dbReference type="Rhea" id="RHEA:13966"/>
    </physiologicalReaction>
</comment>
<comment type="catalytic activity">
    <reaction evidence="3">
        <text>an S-substituted L-cysteine + H2O = a thiol + pyruvate + NH4(+)</text>
        <dbReference type="Rhea" id="RHEA:18121"/>
        <dbReference type="ChEBI" id="CHEBI:15361"/>
        <dbReference type="ChEBI" id="CHEBI:15377"/>
        <dbReference type="ChEBI" id="CHEBI:28938"/>
        <dbReference type="ChEBI" id="CHEBI:29256"/>
        <dbReference type="ChEBI" id="CHEBI:58717"/>
        <dbReference type="EC" id="4.4.1.13"/>
    </reaction>
    <physiologicalReaction direction="left-to-right" evidence="6">
        <dbReference type="Rhea" id="RHEA:18122"/>
    </physiologicalReaction>
</comment>
<comment type="cofactor">
    <cofactor evidence="3">
        <name>pyridoxal 5'-phosphate</name>
        <dbReference type="ChEBI" id="CHEBI:597326"/>
    </cofactor>
</comment>
<comment type="biophysicochemical properties">
    <kinetics>
        <KM evidence="3">2.4 mM for L,L-cystathionine</KM>
        <text evidence="3">kcat is 21000 sec(-1) with L,L-cystathionine as substrate.</text>
    </kinetics>
    <phDependence>
        <text evidence="3">Optimum pH is 8.5.</text>
    </phDependence>
    <temperatureDependence>
        <text evidence="3">Optimum temperature is 50 degrees Celsius.</text>
    </temperatureDependence>
</comment>
<comment type="subunit">
    <text evidence="1">Forms homodimers. May form homotetramers from two homodimers.</text>
</comment>
<comment type="subcellular location">
    <subcellularLocation>
        <location evidence="2">Plastid</location>
        <location evidence="2">Chloroplast</location>
    </subcellularLocation>
</comment>
<comment type="similarity">
    <text evidence="5">Belongs to the trans-sulfuration enzymes family.</text>
</comment>
<sequence>MFSRPFVTPVTIDLQVKSITAGNMWEGLGFYKPANSKSNQMICSKGFRLNCSIDREMIVITKALVDSIAERSSETYEPGLSTVVMNFENEFDPYEAVSTPIYQTATFKQPSATVNGPYDYTRSGNPTRDALERLLAKLDKADRAFCFGSGMAALSAVSQLFENGDEIIAGDDIYGGSDRLLSSVIPRTGVVVKRVNTSDLEEVASAFGPATKLVWLESPTNPRLQISDIGKIAEMAHARGVLVLVDNSIMSPVLCQPLELGADIVMHSATKFIGGHSYIMAGVIAVKGERLAKEMYFLQNAVGSGLAPFDCWLCLQGIKTMELRVEKQQKSAQKIAEFLAFHPRVKKVNYAGLPGHPGRDLHYSQAKGAGSVLSFLTGSLALSKHVVESTKYFSITVSFGSVKSLISMPCFMSHASIPVAVREARGLTEDLVRISVGIENVDDLIADLDQALSSGPL</sequence>
<proteinExistence type="evidence at protein level"/>